<organism>
    <name type="scientific">Xanthomonas axonopodis pv. citri (strain 306)</name>
    <dbReference type="NCBI Taxonomy" id="190486"/>
    <lineage>
        <taxon>Bacteria</taxon>
        <taxon>Pseudomonadati</taxon>
        <taxon>Pseudomonadota</taxon>
        <taxon>Gammaproteobacteria</taxon>
        <taxon>Lysobacterales</taxon>
        <taxon>Lysobacteraceae</taxon>
        <taxon>Xanthomonas</taxon>
    </lineage>
</organism>
<dbReference type="EC" id="4.3.1.3" evidence="1"/>
<dbReference type="EMBL" id="AE008923">
    <property type="protein sequence ID" value="AAM36505.1"/>
    <property type="molecule type" value="Genomic_DNA"/>
</dbReference>
<dbReference type="RefSeq" id="WP_011051049.1">
    <property type="nucleotide sequence ID" value="NC_003919.1"/>
</dbReference>
<dbReference type="SMR" id="Q8PLZ8"/>
<dbReference type="GeneID" id="66910795"/>
<dbReference type="KEGG" id="xac:XAC1637"/>
<dbReference type="eggNOG" id="COG2986">
    <property type="taxonomic scope" value="Bacteria"/>
</dbReference>
<dbReference type="HOGENOM" id="CLU_014801_4_0_6"/>
<dbReference type="UniPathway" id="UPA00379">
    <property type="reaction ID" value="UER00549"/>
</dbReference>
<dbReference type="Proteomes" id="UP000000576">
    <property type="component" value="Chromosome"/>
</dbReference>
<dbReference type="GO" id="GO:0005737">
    <property type="term" value="C:cytoplasm"/>
    <property type="evidence" value="ECO:0007669"/>
    <property type="project" value="UniProtKB-SubCell"/>
</dbReference>
<dbReference type="GO" id="GO:0004397">
    <property type="term" value="F:histidine ammonia-lyase activity"/>
    <property type="evidence" value="ECO:0007669"/>
    <property type="project" value="UniProtKB-UniRule"/>
</dbReference>
<dbReference type="GO" id="GO:0019556">
    <property type="term" value="P:L-histidine catabolic process to glutamate and formamide"/>
    <property type="evidence" value="ECO:0007669"/>
    <property type="project" value="UniProtKB-UniPathway"/>
</dbReference>
<dbReference type="GO" id="GO:0019557">
    <property type="term" value="P:L-histidine catabolic process to glutamate and formate"/>
    <property type="evidence" value="ECO:0007669"/>
    <property type="project" value="UniProtKB-UniPathway"/>
</dbReference>
<dbReference type="CDD" id="cd00332">
    <property type="entry name" value="PAL-HAL"/>
    <property type="match status" value="1"/>
</dbReference>
<dbReference type="FunFam" id="1.10.275.10:FF:000005">
    <property type="entry name" value="Histidine ammonia-lyase"/>
    <property type="match status" value="1"/>
</dbReference>
<dbReference type="FunFam" id="1.20.200.10:FF:000003">
    <property type="entry name" value="Histidine ammonia-lyase"/>
    <property type="match status" value="1"/>
</dbReference>
<dbReference type="Gene3D" id="1.20.200.10">
    <property type="entry name" value="Fumarase/aspartase (Central domain)"/>
    <property type="match status" value="1"/>
</dbReference>
<dbReference type="Gene3D" id="1.10.275.10">
    <property type="entry name" value="Fumarase/aspartase (N-terminal domain)"/>
    <property type="match status" value="1"/>
</dbReference>
<dbReference type="HAMAP" id="MF_00229">
    <property type="entry name" value="His_ammonia_lyase"/>
    <property type="match status" value="1"/>
</dbReference>
<dbReference type="InterPro" id="IPR001106">
    <property type="entry name" value="Aromatic_Lyase"/>
</dbReference>
<dbReference type="InterPro" id="IPR024083">
    <property type="entry name" value="Fumarase/histidase_N"/>
</dbReference>
<dbReference type="InterPro" id="IPR005921">
    <property type="entry name" value="HutH"/>
</dbReference>
<dbReference type="InterPro" id="IPR008948">
    <property type="entry name" value="L-Aspartase-like"/>
</dbReference>
<dbReference type="InterPro" id="IPR022313">
    <property type="entry name" value="Phe/His_NH3-lyase_AS"/>
</dbReference>
<dbReference type="NCBIfam" id="TIGR01225">
    <property type="entry name" value="hutH"/>
    <property type="match status" value="1"/>
</dbReference>
<dbReference type="NCBIfam" id="NF006871">
    <property type="entry name" value="PRK09367.1"/>
    <property type="match status" value="1"/>
</dbReference>
<dbReference type="PANTHER" id="PTHR10362">
    <property type="entry name" value="HISTIDINE AMMONIA-LYASE"/>
    <property type="match status" value="1"/>
</dbReference>
<dbReference type="Pfam" id="PF00221">
    <property type="entry name" value="Lyase_aromatic"/>
    <property type="match status" value="1"/>
</dbReference>
<dbReference type="SUPFAM" id="SSF48557">
    <property type="entry name" value="L-aspartase-like"/>
    <property type="match status" value="1"/>
</dbReference>
<dbReference type="PROSITE" id="PS00488">
    <property type="entry name" value="PAL_HISTIDASE"/>
    <property type="match status" value="1"/>
</dbReference>
<protein>
    <recommendedName>
        <fullName evidence="1">Histidine ammonia-lyase</fullName>
        <shortName evidence="1">Histidase</shortName>
        <ecNumber evidence="1">4.3.1.3</ecNumber>
    </recommendedName>
</protein>
<sequence length="513" mass="53161">MSVSIVLQPGQVTLAQWRALYRGAEVALDDACAAAVLRSAQTVEAIVARGEPVYGVNTGFGKLASVRIEREDLQALQRNIVLSHAAGVGEPTPVPVVRLMMALKLTSLAQGASGVQPDTLALLDAMLRAGITPVVPCQGSVGASGDLAPLSHLAAAMIGVGEAFVGAQRLPAADALAHAQLQPRVLGAKEGLALLNGTQFSTACALAGLFEIETVLQAALVTGALSVEAAKGSDTPFDARIHALRGQPGQIATAAALRALMADSAIRESHRLGDVRVQDPYCLRCQPQVMGAALDVMRQAARTLEIEANGVSDNPLVFSDTGEALSGGNFHAEPVAFAADMLAMAVCEIGSISERRTAMLVDPALSGLPAFLTPRPGLNSGFMIPQVTAAALVSENKQRAYPASVDSIPTSANQEDHVSMAAHGARRLLAMAENAAHVIGIELLAAVQGCDFHAPLRSSTALEAARALLRAQVPTLQDDRYFHPDMLAASALVRSGALAQTVAIPLPGVEQDV</sequence>
<evidence type="ECO:0000255" key="1">
    <source>
        <dbReference type="HAMAP-Rule" id="MF_00229"/>
    </source>
</evidence>
<reference key="1">
    <citation type="journal article" date="2002" name="Nature">
        <title>Comparison of the genomes of two Xanthomonas pathogens with differing host specificities.</title>
        <authorList>
            <person name="da Silva A.C.R."/>
            <person name="Ferro J.A."/>
            <person name="Reinach F.C."/>
            <person name="Farah C.S."/>
            <person name="Furlan L.R."/>
            <person name="Quaggio R.B."/>
            <person name="Monteiro-Vitorello C.B."/>
            <person name="Van Sluys M.A."/>
            <person name="Almeida N.F. Jr."/>
            <person name="Alves L.M.C."/>
            <person name="do Amaral A.M."/>
            <person name="Bertolini M.C."/>
            <person name="Camargo L.E.A."/>
            <person name="Camarotte G."/>
            <person name="Cannavan F."/>
            <person name="Cardozo J."/>
            <person name="Chambergo F."/>
            <person name="Ciapina L.P."/>
            <person name="Cicarelli R.M.B."/>
            <person name="Coutinho L.L."/>
            <person name="Cursino-Santos J.R."/>
            <person name="El-Dorry H."/>
            <person name="Faria J.B."/>
            <person name="Ferreira A.J.S."/>
            <person name="Ferreira R.C.C."/>
            <person name="Ferro M.I.T."/>
            <person name="Formighieri E.F."/>
            <person name="Franco M.C."/>
            <person name="Greggio C.C."/>
            <person name="Gruber A."/>
            <person name="Katsuyama A.M."/>
            <person name="Kishi L.T."/>
            <person name="Leite R.P."/>
            <person name="Lemos E.G.M."/>
            <person name="Lemos M.V.F."/>
            <person name="Locali E.C."/>
            <person name="Machado M.A."/>
            <person name="Madeira A.M.B.N."/>
            <person name="Martinez-Rossi N.M."/>
            <person name="Martins E.C."/>
            <person name="Meidanis J."/>
            <person name="Menck C.F.M."/>
            <person name="Miyaki C.Y."/>
            <person name="Moon D.H."/>
            <person name="Moreira L.M."/>
            <person name="Novo M.T.M."/>
            <person name="Okura V.K."/>
            <person name="Oliveira M.C."/>
            <person name="Oliveira V.R."/>
            <person name="Pereira H.A."/>
            <person name="Rossi A."/>
            <person name="Sena J.A.D."/>
            <person name="Silva C."/>
            <person name="de Souza R.F."/>
            <person name="Spinola L.A.F."/>
            <person name="Takita M.A."/>
            <person name="Tamura R.E."/>
            <person name="Teixeira E.C."/>
            <person name="Tezza R.I.D."/>
            <person name="Trindade dos Santos M."/>
            <person name="Truffi D."/>
            <person name="Tsai S.M."/>
            <person name="White F.F."/>
            <person name="Setubal J.C."/>
            <person name="Kitajima J.P."/>
        </authorList>
    </citation>
    <scope>NUCLEOTIDE SEQUENCE [LARGE SCALE GENOMIC DNA]</scope>
    <source>
        <strain>306</strain>
    </source>
</reference>
<accession>Q8PLZ8</accession>
<keyword id="KW-0963">Cytoplasm</keyword>
<keyword id="KW-0369">Histidine metabolism</keyword>
<keyword id="KW-0456">Lyase</keyword>
<name>HUTH_XANAC</name>
<proteinExistence type="inferred from homology"/>
<feature type="chain" id="PRO_0000161051" description="Histidine ammonia-lyase">
    <location>
        <begin position="1"/>
        <end position="513"/>
    </location>
</feature>
<feature type="modified residue" description="2,3-didehydroalanine (Ser)" evidence="1">
    <location>
        <position position="144"/>
    </location>
</feature>
<feature type="cross-link" description="5-imidazolinone (Ala-Gly)" evidence="1">
    <location>
        <begin position="143"/>
        <end position="145"/>
    </location>
</feature>
<gene>
    <name evidence="1" type="primary">hutH</name>
    <name type="ordered locus">XAC1637</name>
</gene>
<comment type="catalytic activity">
    <reaction evidence="1">
        <text>L-histidine = trans-urocanate + NH4(+)</text>
        <dbReference type="Rhea" id="RHEA:21232"/>
        <dbReference type="ChEBI" id="CHEBI:17771"/>
        <dbReference type="ChEBI" id="CHEBI:28938"/>
        <dbReference type="ChEBI" id="CHEBI:57595"/>
        <dbReference type="EC" id="4.3.1.3"/>
    </reaction>
</comment>
<comment type="pathway">
    <text evidence="1">Amino-acid degradation; L-histidine degradation into L-glutamate; N-formimidoyl-L-glutamate from L-histidine: step 1/3.</text>
</comment>
<comment type="subcellular location">
    <subcellularLocation>
        <location evidence="1">Cytoplasm</location>
    </subcellularLocation>
</comment>
<comment type="PTM">
    <text evidence="1">Contains an active site 4-methylidene-imidazol-5-one (MIO), which is formed autocatalytically by cyclization and dehydration of residues Ala-Ser-Gly.</text>
</comment>
<comment type="similarity">
    <text evidence="1">Belongs to the PAL/histidase family.</text>
</comment>